<keyword id="KW-0067">ATP-binding</keyword>
<keyword id="KW-0137">Centromere</keyword>
<keyword id="KW-0158">Chromosome</keyword>
<keyword id="KW-0159">Chromosome partition</keyword>
<keyword id="KW-0963">Cytoplasm</keyword>
<keyword id="KW-0206">Cytoskeleton</keyword>
<keyword id="KW-0217">Developmental protein</keyword>
<keyword id="KW-0418">Kinase</keyword>
<keyword id="KW-0547">Nucleotide-binding</keyword>
<keyword id="KW-0539">Nucleus</keyword>
<keyword id="KW-1185">Reference proteome</keyword>
<keyword id="KW-0723">Serine/threonine-protein kinase</keyword>
<keyword id="KW-0808">Transferase</keyword>
<organism>
    <name type="scientific">Danio rerio</name>
    <name type="common">Zebrafish</name>
    <name type="synonym">Brachydanio rerio</name>
    <dbReference type="NCBI Taxonomy" id="7955"/>
    <lineage>
        <taxon>Eukaryota</taxon>
        <taxon>Metazoa</taxon>
        <taxon>Chordata</taxon>
        <taxon>Craniata</taxon>
        <taxon>Vertebrata</taxon>
        <taxon>Euteleostomi</taxon>
        <taxon>Actinopterygii</taxon>
        <taxon>Neopterygii</taxon>
        <taxon>Teleostei</taxon>
        <taxon>Ostariophysi</taxon>
        <taxon>Cypriniformes</taxon>
        <taxon>Danionidae</taxon>
        <taxon>Danioninae</taxon>
        <taxon>Danio</taxon>
    </lineage>
</organism>
<reference key="1">
    <citation type="journal article" date="2002" name="Nat. Genet.">
        <title>Insertional mutagenesis in zebrafish rapidly identifies genes essential for early vertebrate development.</title>
        <authorList>
            <person name="Golling G."/>
            <person name="Amsterdam A."/>
            <person name="Sun Z."/>
            <person name="Antonelli M."/>
            <person name="Maldonado E."/>
            <person name="Chen W."/>
            <person name="Burgess S."/>
            <person name="Haldi M."/>
            <person name="Artzt K."/>
            <person name="Farrington S."/>
            <person name="Lin S.-Y."/>
            <person name="Nissen R.M."/>
            <person name="Hopkins N."/>
        </authorList>
    </citation>
    <scope>NUCLEOTIDE SEQUENCE [LARGE SCALE MRNA]</scope>
    <scope>DISRUPTION PHENOTYPE</scope>
    <source>
        <tissue>Embryo</tissue>
    </source>
</reference>
<reference key="2">
    <citation type="submission" date="2004-03" db="EMBL/GenBank/DDBJ databases">
        <authorList>
            <consortium name="NIH - Zebrafish Gene Collection (ZGC) project"/>
        </authorList>
    </citation>
    <scope>NUCLEOTIDE SEQUENCE [LARGE SCALE MRNA]</scope>
    <source>
        <tissue>Kidney</tissue>
    </source>
</reference>
<gene>
    <name type="primary">aurkb</name>
    <name type="synonym">stka</name>
</gene>
<comment type="function">
    <text evidence="1">Serine/threonine-protein kinase component of the chromosomal passenger complex (CPC), a complex that acts as a key regulator of mitosis (By similarity). The CPC complex has essential functions at the centromere in ensuring correct chromosome alignment and segregation and is required for chromatin-induced microtubule stabilization and spindle assembly (By similarity). Involved in the bipolar attachment of spindle microtubules to kinetochores and is a key regulator for the onset of cytokinesis during mitosis (By similarity). Required for central/midzone spindle assembly and cleavage furrow formation (By similarity). Key component of the cytokinesis checkpoint, a process required to delay abscission to prevent both premature resolution of intercellular chromosome bridges and accumulation of DNA damage (By similarity). Phosphorylates 'Ser-10' of histone H3 during mitosis (By similarity).</text>
</comment>
<comment type="catalytic activity">
    <reaction evidence="1">
        <text>L-seryl-[protein] + ATP = O-phospho-L-seryl-[protein] + ADP + H(+)</text>
        <dbReference type="Rhea" id="RHEA:17989"/>
        <dbReference type="Rhea" id="RHEA-COMP:9863"/>
        <dbReference type="Rhea" id="RHEA-COMP:11604"/>
        <dbReference type="ChEBI" id="CHEBI:15378"/>
        <dbReference type="ChEBI" id="CHEBI:29999"/>
        <dbReference type="ChEBI" id="CHEBI:30616"/>
        <dbReference type="ChEBI" id="CHEBI:83421"/>
        <dbReference type="ChEBI" id="CHEBI:456216"/>
        <dbReference type="EC" id="2.7.11.1"/>
    </reaction>
</comment>
<comment type="catalytic activity">
    <reaction evidence="1">
        <text>L-threonyl-[protein] + ATP = O-phospho-L-threonyl-[protein] + ADP + H(+)</text>
        <dbReference type="Rhea" id="RHEA:46608"/>
        <dbReference type="Rhea" id="RHEA-COMP:11060"/>
        <dbReference type="Rhea" id="RHEA-COMP:11605"/>
        <dbReference type="ChEBI" id="CHEBI:15378"/>
        <dbReference type="ChEBI" id="CHEBI:30013"/>
        <dbReference type="ChEBI" id="CHEBI:30616"/>
        <dbReference type="ChEBI" id="CHEBI:61977"/>
        <dbReference type="ChEBI" id="CHEBI:456216"/>
        <dbReference type="EC" id="2.7.11.1"/>
    </reaction>
</comment>
<comment type="activity regulation">
    <text evidence="1">Kinase activity is stimulated by cell-cycle specific phosphorylation.</text>
</comment>
<comment type="subunit">
    <text evidence="1">Component of the chromosomal passenger complex (CPC).</text>
</comment>
<comment type="subcellular location">
    <subcellularLocation>
        <location evidence="1">Nucleus</location>
    </subcellularLocation>
    <subcellularLocation>
        <location evidence="1">Chromosome</location>
    </subcellularLocation>
    <subcellularLocation>
        <location evidence="1">Chromosome</location>
        <location evidence="1">Centromere</location>
    </subcellularLocation>
    <subcellularLocation>
        <location evidence="1">Cytoplasm</location>
        <location evidence="1">Cytoskeleton</location>
        <location evidence="1">Spindle</location>
    </subcellularLocation>
    <subcellularLocation>
        <location evidence="1">Midbody</location>
    </subcellularLocation>
    <text evidence="1">Localizes on chromosome arms and inner centromeres from prophase through metaphase and then transferring to the spindle midzone and midbody from anaphase through cytokinesis. Localization (and probably targeting of the CPC) to the inner centromere occurs predominantly in regions with overlapping mitosis-specific histone phosphorylations H3pT3 and H2ApT12.</text>
</comment>
<comment type="disruption phenotype">
    <text evidence="5">Embryos show severe brain necrosis.</text>
</comment>
<comment type="similarity">
    <text evidence="2">Belongs to the protein kinase superfamily. Ser/Thr protein kinase family. Aurora subfamily.</text>
</comment>
<comment type="sequence caution" evidence="6">
    <conflict type="frameshift">
        <sequence resource="EMBL-CDS" id="AAM28206"/>
    </conflict>
</comment>
<dbReference type="EC" id="2.7.11.1"/>
<dbReference type="EMBL" id="AY099518">
    <property type="protein sequence ID" value="AAM28206.1"/>
    <property type="status" value="ALT_FRAME"/>
    <property type="molecule type" value="mRNA"/>
</dbReference>
<dbReference type="EMBL" id="BC067695">
    <property type="protein sequence ID" value="AAH67695.1"/>
    <property type="molecule type" value="mRNA"/>
</dbReference>
<dbReference type="SMR" id="Q6NW76"/>
<dbReference type="FunCoup" id="Q6NW76">
    <property type="interactions" value="1230"/>
</dbReference>
<dbReference type="STRING" id="7955.ENSDARP00000054822"/>
<dbReference type="PaxDb" id="7955-ENSDARP00000054822"/>
<dbReference type="AGR" id="ZFIN:ZDB-GENE-020419-40"/>
<dbReference type="ZFIN" id="ZDB-GENE-020419-40">
    <property type="gene designation" value="aurkb"/>
</dbReference>
<dbReference type="eggNOG" id="KOG0580">
    <property type="taxonomic scope" value="Eukaryota"/>
</dbReference>
<dbReference type="InParanoid" id="Q6NW76"/>
<dbReference type="PhylomeDB" id="Q6NW76"/>
<dbReference type="PRO" id="PR:Q6NW76"/>
<dbReference type="Proteomes" id="UP000000437">
    <property type="component" value="Unplaced"/>
</dbReference>
<dbReference type="GO" id="GO:0005813">
    <property type="term" value="C:centrosome"/>
    <property type="evidence" value="ECO:0000318"/>
    <property type="project" value="GO_Central"/>
</dbReference>
<dbReference type="GO" id="GO:0032133">
    <property type="term" value="C:chromosome passenger complex"/>
    <property type="evidence" value="ECO:0000318"/>
    <property type="project" value="GO_Central"/>
</dbReference>
<dbReference type="GO" id="GO:0005737">
    <property type="term" value="C:cytoplasm"/>
    <property type="evidence" value="ECO:0007669"/>
    <property type="project" value="UniProtKB-KW"/>
</dbReference>
<dbReference type="GO" id="GO:0000776">
    <property type="term" value="C:kinetochore"/>
    <property type="evidence" value="ECO:0000250"/>
    <property type="project" value="UniProtKB"/>
</dbReference>
<dbReference type="GO" id="GO:0030496">
    <property type="term" value="C:midbody"/>
    <property type="evidence" value="ECO:0000250"/>
    <property type="project" value="UniProtKB"/>
</dbReference>
<dbReference type="GO" id="GO:0005634">
    <property type="term" value="C:nucleus"/>
    <property type="evidence" value="ECO:0000250"/>
    <property type="project" value="UniProtKB"/>
</dbReference>
<dbReference type="GO" id="GO:0005876">
    <property type="term" value="C:spindle microtubule"/>
    <property type="evidence" value="ECO:0000318"/>
    <property type="project" value="GO_Central"/>
</dbReference>
<dbReference type="GO" id="GO:0051233">
    <property type="term" value="C:spindle midzone"/>
    <property type="evidence" value="ECO:0000318"/>
    <property type="project" value="GO_Central"/>
</dbReference>
<dbReference type="GO" id="GO:0000922">
    <property type="term" value="C:spindle pole"/>
    <property type="evidence" value="ECO:0000318"/>
    <property type="project" value="GO_Central"/>
</dbReference>
<dbReference type="GO" id="GO:0005524">
    <property type="term" value="F:ATP binding"/>
    <property type="evidence" value="ECO:0007669"/>
    <property type="project" value="UniProtKB-KW"/>
</dbReference>
<dbReference type="GO" id="GO:0106310">
    <property type="term" value="F:protein serine kinase activity"/>
    <property type="evidence" value="ECO:0007669"/>
    <property type="project" value="RHEA"/>
</dbReference>
<dbReference type="GO" id="GO:0004674">
    <property type="term" value="F:protein serine/threonine kinase activity"/>
    <property type="evidence" value="ECO:0000250"/>
    <property type="project" value="UniProtKB"/>
</dbReference>
<dbReference type="GO" id="GO:0034644">
    <property type="term" value="P:cellular response to UV"/>
    <property type="evidence" value="ECO:0000250"/>
    <property type="project" value="UniProtKB"/>
</dbReference>
<dbReference type="GO" id="GO:0007059">
    <property type="term" value="P:chromosome segregation"/>
    <property type="evidence" value="ECO:0000315"/>
    <property type="project" value="ZFIN"/>
</dbReference>
<dbReference type="GO" id="GO:0036089">
    <property type="term" value="P:cleavage furrow formation"/>
    <property type="evidence" value="ECO:0000315"/>
    <property type="project" value="ZFIN"/>
</dbReference>
<dbReference type="GO" id="GO:0000226">
    <property type="term" value="P:microtubule cytoskeleton organization"/>
    <property type="evidence" value="ECO:0000315"/>
    <property type="project" value="ZFIN"/>
</dbReference>
<dbReference type="GO" id="GO:0061952">
    <property type="term" value="P:midbody abscission"/>
    <property type="evidence" value="ECO:0000250"/>
    <property type="project" value="UniProtKB"/>
</dbReference>
<dbReference type="GO" id="GO:0000281">
    <property type="term" value="P:mitotic cytokinesis"/>
    <property type="evidence" value="ECO:0000315"/>
    <property type="project" value="ZFIN"/>
</dbReference>
<dbReference type="GO" id="GO:0044878">
    <property type="term" value="P:mitotic cytokinesis checkpoint signaling"/>
    <property type="evidence" value="ECO:0000250"/>
    <property type="project" value="UniProtKB"/>
</dbReference>
<dbReference type="GO" id="GO:1990758">
    <property type="term" value="P:mitotic sister chromatid biorientation"/>
    <property type="evidence" value="ECO:0000250"/>
    <property type="project" value="UniProtKB"/>
</dbReference>
<dbReference type="GO" id="GO:0051256">
    <property type="term" value="P:mitotic spindle midzone assembly"/>
    <property type="evidence" value="ECO:0000250"/>
    <property type="project" value="UniProtKB"/>
</dbReference>
<dbReference type="GO" id="GO:0007052">
    <property type="term" value="P:mitotic spindle organization"/>
    <property type="evidence" value="ECO:0000318"/>
    <property type="project" value="GO_Central"/>
</dbReference>
<dbReference type="GO" id="GO:0002903">
    <property type="term" value="P:negative regulation of B cell apoptotic process"/>
    <property type="evidence" value="ECO:0000250"/>
    <property type="project" value="UniProtKB"/>
</dbReference>
<dbReference type="GO" id="GO:0032466">
    <property type="term" value="P:negative regulation of cytokinesis"/>
    <property type="evidence" value="ECO:0000250"/>
    <property type="project" value="UniProtKB"/>
</dbReference>
<dbReference type="GO" id="GO:0000122">
    <property type="term" value="P:negative regulation of transcription by RNA polymerase II"/>
    <property type="evidence" value="ECO:0000250"/>
    <property type="project" value="UniProtKB"/>
</dbReference>
<dbReference type="GO" id="GO:0032467">
    <property type="term" value="P:positive regulation of cytokinesis"/>
    <property type="evidence" value="ECO:0000250"/>
    <property type="project" value="UniProtKB"/>
</dbReference>
<dbReference type="GO" id="GO:0062033">
    <property type="term" value="P:positive regulation of mitotic sister chromatid segregation"/>
    <property type="evidence" value="ECO:0000250"/>
    <property type="project" value="UniProtKB"/>
</dbReference>
<dbReference type="GO" id="GO:0043687">
    <property type="term" value="P:post-translational protein modification"/>
    <property type="evidence" value="ECO:0000250"/>
    <property type="project" value="UniProtKB"/>
</dbReference>
<dbReference type="GO" id="GO:0034501">
    <property type="term" value="P:protein localization to kinetochore"/>
    <property type="evidence" value="ECO:0000250"/>
    <property type="project" value="UniProtKB"/>
</dbReference>
<dbReference type="GO" id="GO:0032465">
    <property type="term" value="P:regulation of cytokinesis"/>
    <property type="evidence" value="ECO:0000318"/>
    <property type="project" value="GO_Central"/>
</dbReference>
<dbReference type="GO" id="GO:0140273">
    <property type="term" value="P:repair of mitotic kinetochore microtubule attachment defect"/>
    <property type="evidence" value="ECO:0000250"/>
    <property type="project" value="UniProtKB"/>
</dbReference>
<dbReference type="CDD" id="cd14117">
    <property type="entry name" value="STKc_Aurora-B_like"/>
    <property type="match status" value="1"/>
</dbReference>
<dbReference type="FunFam" id="3.30.200.20:FF:000042">
    <property type="entry name" value="Aurora kinase A"/>
    <property type="match status" value="1"/>
</dbReference>
<dbReference type="FunFam" id="1.10.510.10:FF:000235">
    <property type="entry name" value="Serine/threonine-protein kinase ark1"/>
    <property type="match status" value="1"/>
</dbReference>
<dbReference type="Gene3D" id="3.30.200.20">
    <property type="entry name" value="Phosphorylase Kinase, domain 1"/>
    <property type="match status" value="1"/>
</dbReference>
<dbReference type="Gene3D" id="1.10.510.10">
    <property type="entry name" value="Transferase(Phosphotransferase) domain 1"/>
    <property type="match status" value="1"/>
</dbReference>
<dbReference type="InterPro" id="IPR030616">
    <property type="entry name" value="Aur-like"/>
</dbReference>
<dbReference type="InterPro" id="IPR011009">
    <property type="entry name" value="Kinase-like_dom_sf"/>
</dbReference>
<dbReference type="InterPro" id="IPR000719">
    <property type="entry name" value="Prot_kinase_dom"/>
</dbReference>
<dbReference type="InterPro" id="IPR017441">
    <property type="entry name" value="Protein_kinase_ATP_BS"/>
</dbReference>
<dbReference type="InterPro" id="IPR008271">
    <property type="entry name" value="Ser/Thr_kinase_AS"/>
</dbReference>
<dbReference type="PANTHER" id="PTHR24350">
    <property type="entry name" value="SERINE/THREONINE-PROTEIN KINASE IAL-RELATED"/>
    <property type="match status" value="1"/>
</dbReference>
<dbReference type="Pfam" id="PF00069">
    <property type="entry name" value="Pkinase"/>
    <property type="match status" value="1"/>
</dbReference>
<dbReference type="SMART" id="SM00220">
    <property type="entry name" value="S_TKc"/>
    <property type="match status" value="1"/>
</dbReference>
<dbReference type="SUPFAM" id="SSF56112">
    <property type="entry name" value="Protein kinase-like (PK-like)"/>
    <property type="match status" value="1"/>
</dbReference>
<dbReference type="PROSITE" id="PS00107">
    <property type="entry name" value="PROTEIN_KINASE_ATP"/>
    <property type="match status" value="1"/>
</dbReference>
<dbReference type="PROSITE" id="PS50011">
    <property type="entry name" value="PROTEIN_KINASE_DOM"/>
    <property type="match status" value="1"/>
</dbReference>
<dbReference type="PROSITE" id="PS00108">
    <property type="entry name" value="PROTEIN_KINASE_ST"/>
    <property type="match status" value="1"/>
</dbReference>
<sequence length="320" mass="36947">MQNKENREPRVQQTPSAGVGPLRVEMNPDTHAVSGPGRVPVKSNSKVLSIDDFDIGRPLGKGKFGNVYLARERKLKVVIALKVLFKSQMVKEGVEHQLRREIEIQSHLRHPNILRFYNYFHDDTRVFLILEYAPRGEMYKELQRYGRFDDQRTATYMEEVSDALQYCHEKKVIHRDIKPENLLLGYRGELKIADFGWSVHAPSLRRRTMCGTLDYLPPEMIEGHSHDEKVDLWSIGVLCYECLVGNPPFETASHAETYKRITKVDLQFPKLVSEGARDLISKLLRHSPSMRLPLRSVMEHPWVKANSRRVLPPVCSSEPH</sequence>
<feature type="chain" id="PRO_0000259599" description="Aurora kinase B">
    <location>
        <begin position="1"/>
        <end position="320"/>
    </location>
</feature>
<feature type="domain" description="Protein kinase" evidence="2">
    <location>
        <begin position="53"/>
        <end position="303"/>
    </location>
</feature>
<feature type="region of interest" description="Disordered" evidence="4">
    <location>
        <begin position="1"/>
        <end position="38"/>
    </location>
</feature>
<feature type="compositionally biased region" description="Basic and acidic residues" evidence="4">
    <location>
        <begin position="1"/>
        <end position="10"/>
    </location>
</feature>
<feature type="active site" description="Proton acceptor" evidence="2 3">
    <location>
        <position position="176"/>
    </location>
</feature>
<feature type="binding site" evidence="2">
    <location>
        <begin position="59"/>
        <end position="67"/>
    </location>
    <ligand>
        <name>ATP</name>
        <dbReference type="ChEBI" id="CHEBI:30616"/>
    </ligand>
</feature>
<feature type="binding site" evidence="2">
    <location>
        <position position="82"/>
    </location>
    <ligand>
        <name>ATP</name>
        <dbReference type="ChEBI" id="CHEBI:30616"/>
    </ligand>
</feature>
<feature type="sequence conflict" description="In Ref. 1; AAM28206." evidence="6" ref="1">
    <original>R</original>
    <variation>H</variation>
    <location>
        <position position="147"/>
    </location>
</feature>
<feature type="sequence conflict" description="In Ref. 1; AAM28206." evidence="6" ref="1">
    <original>AS</original>
    <variation>RQ</variation>
    <location>
        <begin position="252"/>
        <end position="253"/>
    </location>
</feature>
<feature type="sequence conflict" description="In Ref. 1; AAM28206." evidence="6" ref="1">
    <original>PW</original>
    <variation>RG</variation>
    <location>
        <begin position="301"/>
        <end position="302"/>
    </location>
</feature>
<feature type="sequence conflict" description="In Ref. 1; AAM28206." evidence="6" ref="1">
    <original>E</original>
    <variation>D</variation>
    <location>
        <position position="318"/>
    </location>
</feature>
<name>AURKB_DANRE</name>
<protein>
    <recommendedName>
        <fullName>Aurora kinase B</fullName>
        <ecNumber>2.7.11.1</ecNumber>
    </recommendedName>
    <alternativeName>
        <fullName>Serine/threonine kinase A</fullName>
    </alternativeName>
    <alternativeName>
        <fullName>Serine/threonine-protein kinase 12</fullName>
    </alternativeName>
    <alternativeName>
        <fullName>Serine/threonine-protein kinase aurora-B</fullName>
    </alternativeName>
</protein>
<proteinExistence type="evidence at transcript level"/>
<evidence type="ECO:0000250" key="1">
    <source>
        <dbReference type="UniProtKB" id="Q96GD4"/>
    </source>
</evidence>
<evidence type="ECO:0000255" key="2">
    <source>
        <dbReference type="PROSITE-ProRule" id="PRU00159"/>
    </source>
</evidence>
<evidence type="ECO:0000255" key="3">
    <source>
        <dbReference type="PROSITE-ProRule" id="PRU10027"/>
    </source>
</evidence>
<evidence type="ECO:0000256" key="4">
    <source>
        <dbReference type="SAM" id="MobiDB-lite"/>
    </source>
</evidence>
<evidence type="ECO:0000269" key="5">
    <source>
    </source>
</evidence>
<evidence type="ECO:0000305" key="6"/>
<accession>Q6NW76</accession>
<accession>Q8JGS8</accession>